<organism>
    <name type="scientific">Yersinia pseudotuberculosis serotype O:1b (strain IP 31758)</name>
    <dbReference type="NCBI Taxonomy" id="349747"/>
    <lineage>
        <taxon>Bacteria</taxon>
        <taxon>Pseudomonadati</taxon>
        <taxon>Pseudomonadota</taxon>
        <taxon>Gammaproteobacteria</taxon>
        <taxon>Enterobacterales</taxon>
        <taxon>Yersiniaceae</taxon>
        <taxon>Yersinia</taxon>
    </lineage>
</organism>
<feature type="chain" id="PRO_1000188157" description="Small ribosomal subunit biogenesis GTPase RsgA">
    <location>
        <begin position="1"/>
        <end position="350"/>
    </location>
</feature>
<feature type="domain" description="CP-type G" evidence="2">
    <location>
        <begin position="103"/>
        <end position="273"/>
    </location>
</feature>
<feature type="region of interest" description="Disordered" evidence="3">
    <location>
        <begin position="1"/>
        <end position="35"/>
    </location>
</feature>
<feature type="compositionally biased region" description="Polar residues" evidence="3">
    <location>
        <begin position="1"/>
        <end position="17"/>
    </location>
</feature>
<feature type="binding site" evidence="1">
    <location>
        <begin position="159"/>
        <end position="162"/>
    </location>
    <ligand>
        <name>GTP</name>
        <dbReference type="ChEBI" id="CHEBI:37565"/>
    </ligand>
</feature>
<feature type="binding site" evidence="1">
    <location>
        <begin position="213"/>
        <end position="221"/>
    </location>
    <ligand>
        <name>GTP</name>
        <dbReference type="ChEBI" id="CHEBI:37565"/>
    </ligand>
</feature>
<feature type="binding site" evidence="1">
    <location>
        <position position="297"/>
    </location>
    <ligand>
        <name>Zn(2+)</name>
        <dbReference type="ChEBI" id="CHEBI:29105"/>
    </ligand>
</feature>
<feature type="binding site" evidence="1">
    <location>
        <position position="302"/>
    </location>
    <ligand>
        <name>Zn(2+)</name>
        <dbReference type="ChEBI" id="CHEBI:29105"/>
    </ligand>
</feature>
<feature type="binding site" evidence="1">
    <location>
        <position position="304"/>
    </location>
    <ligand>
        <name>Zn(2+)</name>
        <dbReference type="ChEBI" id="CHEBI:29105"/>
    </ligand>
</feature>
<feature type="binding site" evidence="1">
    <location>
        <position position="310"/>
    </location>
    <ligand>
        <name>Zn(2+)</name>
        <dbReference type="ChEBI" id="CHEBI:29105"/>
    </ligand>
</feature>
<dbReference type="EC" id="3.6.1.-" evidence="1"/>
<dbReference type="EMBL" id="CP000720">
    <property type="protein sequence ID" value="ABS46705.1"/>
    <property type="molecule type" value="Genomic_DNA"/>
</dbReference>
<dbReference type="RefSeq" id="WP_002209142.1">
    <property type="nucleotide sequence ID" value="NC_009708.1"/>
</dbReference>
<dbReference type="SMR" id="A7FMY8"/>
<dbReference type="GeneID" id="57974243"/>
<dbReference type="KEGG" id="ypi:YpsIP31758_3662"/>
<dbReference type="HOGENOM" id="CLU_033617_2_0_6"/>
<dbReference type="Proteomes" id="UP000002412">
    <property type="component" value="Chromosome"/>
</dbReference>
<dbReference type="GO" id="GO:0005737">
    <property type="term" value="C:cytoplasm"/>
    <property type="evidence" value="ECO:0007669"/>
    <property type="project" value="UniProtKB-SubCell"/>
</dbReference>
<dbReference type="GO" id="GO:0005525">
    <property type="term" value="F:GTP binding"/>
    <property type="evidence" value="ECO:0007669"/>
    <property type="project" value="UniProtKB-UniRule"/>
</dbReference>
<dbReference type="GO" id="GO:0003924">
    <property type="term" value="F:GTPase activity"/>
    <property type="evidence" value="ECO:0007669"/>
    <property type="project" value="UniProtKB-UniRule"/>
</dbReference>
<dbReference type="GO" id="GO:0046872">
    <property type="term" value="F:metal ion binding"/>
    <property type="evidence" value="ECO:0007669"/>
    <property type="project" value="UniProtKB-KW"/>
</dbReference>
<dbReference type="GO" id="GO:0019843">
    <property type="term" value="F:rRNA binding"/>
    <property type="evidence" value="ECO:0007669"/>
    <property type="project" value="UniProtKB-KW"/>
</dbReference>
<dbReference type="GO" id="GO:0042274">
    <property type="term" value="P:ribosomal small subunit biogenesis"/>
    <property type="evidence" value="ECO:0007669"/>
    <property type="project" value="UniProtKB-UniRule"/>
</dbReference>
<dbReference type="CDD" id="cd01854">
    <property type="entry name" value="YjeQ_EngC"/>
    <property type="match status" value="1"/>
</dbReference>
<dbReference type="Gene3D" id="2.40.50.140">
    <property type="entry name" value="Nucleic acid-binding proteins"/>
    <property type="match status" value="1"/>
</dbReference>
<dbReference type="Gene3D" id="3.40.50.300">
    <property type="entry name" value="P-loop containing nucleotide triphosphate hydrolases"/>
    <property type="match status" value="1"/>
</dbReference>
<dbReference type="Gene3D" id="1.10.40.50">
    <property type="entry name" value="Probable gtpase engc, domain 3"/>
    <property type="match status" value="1"/>
</dbReference>
<dbReference type="HAMAP" id="MF_01820">
    <property type="entry name" value="GTPase_RsgA"/>
    <property type="match status" value="1"/>
</dbReference>
<dbReference type="InterPro" id="IPR030378">
    <property type="entry name" value="G_CP_dom"/>
</dbReference>
<dbReference type="InterPro" id="IPR012340">
    <property type="entry name" value="NA-bd_OB-fold"/>
</dbReference>
<dbReference type="InterPro" id="IPR027417">
    <property type="entry name" value="P-loop_NTPase"/>
</dbReference>
<dbReference type="InterPro" id="IPR004881">
    <property type="entry name" value="Ribosome_biogen_GTPase_RsgA"/>
</dbReference>
<dbReference type="InterPro" id="IPR010914">
    <property type="entry name" value="RsgA_GTPase_dom"/>
</dbReference>
<dbReference type="NCBIfam" id="NF008931">
    <property type="entry name" value="PRK12288.1"/>
    <property type="match status" value="1"/>
</dbReference>
<dbReference type="NCBIfam" id="TIGR00157">
    <property type="entry name" value="ribosome small subunit-dependent GTPase A"/>
    <property type="match status" value="1"/>
</dbReference>
<dbReference type="PANTHER" id="PTHR32120">
    <property type="entry name" value="SMALL RIBOSOMAL SUBUNIT BIOGENESIS GTPASE RSGA"/>
    <property type="match status" value="1"/>
</dbReference>
<dbReference type="PANTHER" id="PTHR32120:SF11">
    <property type="entry name" value="SMALL RIBOSOMAL SUBUNIT BIOGENESIS GTPASE RSGA 1, MITOCHONDRIAL-RELATED"/>
    <property type="match status" value="1"/>
</dbReference>
<dbReference type="Pfam" id="PF03193">
    <property type="entry name" value="RsgA_GTPase"/>
    <property type="match status" value="1"/>
</dbReference>
<dbReference type="SUPFAM" id="SSF52540">
    <property type="entry name" value="P-loop containing nucleoside triphosphate hydrolases"/>
    <property type="match status" value="1"/>
</dbReference>
<dbReference type="PROSITE" id="PS50936">
    <property type="entry name" value="ENGC_GTPASE"/>
    <property type="match status" value="1"/>
</dbReference>
<dbReference type="PROSITE" id="PS51721">
    <property type="entry name" value="G_CP"/>
    <property type="match status" value="1"/>
</dbReference>
<evidence type="ECO:0000255" key="1">
    <source>
        <dbReference type="HAMAP-Rule" id="MF_01820"/>
    </source>
</evidence>
<evidence type="ECO:0000255" key="2">
    <source>
        <dbReference type="PROSITE-ProRule" id="PRU01058"/>
    </source>
</evidence>
<evidence type="ECO:0000256" key="3">
    <source>
        <dbReference type="SAM" id="MobiDB-lite"/>
    </source>
</evidence>
<name>RSGA_YERP3</name>
<gene>
    <name evidence="1" type="primary">rsgA</name>
    <name type="ordered locus">YpsIP31758_3662</name>
</gene>
<protein>
    <recommendedName>
        <fullName evidence="1">Small ribosomal subunit biogenesis GTPase RsgA</fullName>
        <ecNumber evidence="1">3.6.1.-</ecNumber>
    </recommendedName>
</protein>
<accession>A7FMY8</accession>
<sequence length="350" mass="39092">MSKNKLSKGQQRRVQANHQRRLRTDRKPELDDSQLGDAQEGIVISRFGQHADVEAVDGTQHRCNIRRTIKSLVTGDRVVWRPGLQAQEGVRVKGIVEAVHERTSVLTRPDLYDGVKPIAANIDQIVIVSAILPELSLNIIDRYLVACETLEVEPLIVLNKIDLLDADGRKFVDGMMDIYRRIGYDVLEVSSQTREGMEAFENALTGRISIFAGQSGVGKSSLLNALLPPTDNEILVNTVSGNSGLGQHTTTAARLYHFQHGGDVIDSPGVREFGLWHLAPEQITQGFVEFRDYLGHCKFRDCSHTNDPGCALREAVEQGKIAEERFDNYHRILESMEQAKPRKTSDSDEK</sequence>
<comment type="function">
    <text evidence="1">One of several proteins that assist in the late maturation steps of the functional core of the 30S ribosomal subunit. Helps release RbfA from mature subunits. May play a role in the assembly of ribosomal proteins into the subunit. Circularly permuted GTPase that catalyzes slow GTP hydrolysis, GTPase activity is stimulated by the 30S ribosomal subunit.</text>
</comment>
<comment type="cofactor">
    <cofactor evidence="1">
        <name>Zn(2+)</name>
        <dbReference type="ChEBI" id="CHEBI:29105"/>
    </cofactor>
    <text evidence="1">Binds 1 zinc ion per subunit.</text>
</comment>
<comment type="subunit">
    <text evidence="1">Monomer. Associates with 30S ribosomal subunit, binds 16S rRNA.</text>
</comment>
<comment type="subcellular location">
    <subcellularLocation>
        <location evidence="1">Cytoplasm</location>
    </subcellularLocation>
</comment>
<comment type="similarity">
    <text evidence="1">Belongs to the TRAFAC class YlqF/YawG GTPase family. RsgA subfamily.</text>
</comment>
<proteinExistence type="inferred from homology"/>
<reference key="1">
    <citation type="journal article" date="2007" name="PLoS Genet.">
        <title>The complete genome sequence of Yersinia pseudotuberculosis IP31758, the causative agent of Far East scarlet-like fever.</title>
        <authorList>
            <person name="Eppinger M."/>
            <person name="Rosovitz M.J."/>
            <person name="Fricke W.F."/>
            <person name="Rasko D.A."/>
            <person name="Kokorina G."/>
            <person name="Fayolle C."/>
            <person name="Lindler L.E."/>
            <person name="Carniel E."/>
            <person name="Ravel J."/>
        </authorList>
    </citation>
    <scope>NUCLEOTIDE SEQUENCE [LARGE SCALE GENOMIC DNA]</scope>
    <source>
        <strain>IP 31758</strain>
    </source>
</reference>
<keyword id="KW-0963">Cytoplasm</keyword>
<keyword id="KW-0342">GTP-binding</keyword>
<keyword id="KW-0378">Hydrolase</keyword>
<keyword id="KW-0479">Metal-binding</keyword>
<keyword id="KW-0547">Nucleotide-binding</keyword>
<keyword id="KW-0690">Ribosome biogenesis</keyword>
<keyword id="KW-0694">RNA-binding</keyword>
<keyword id="KW-0699">rRNA-binding</keyword>
<keyword id="KW-0862">Zinc</keyword>